<keyword id="KW-0521">NADP</keyword>
<keyword id="KW-0560">Oxidoreductase</keyword>
<keyword id="KW-0627">Porphyrin biosynthesis</keyword>
<organism>
    <name type="scientific">Xanthomonas campestris pv. phaseoli</name>
    <dbReference type="NCBI Taxonomy" id="317013"/>
    <lineage>
        <taxon>Bacteria</taxon>
        <taxon>Pseudomonadati</taxon>
        <taxon>Pseudomonadota</taxon>
        <taxon>Gammaproteobacteria</taxon>
        <taxon>Lysobacterales</taxon>
        <taxon>Lysobacteraceae</taxon>
        <taxon>Xanthomonas</taxon>
    </lineage>
</organism>
<comment type="function">
    <text evidence="3">Catalyzes the NADPH-dependent reduction of glutamyl-tRNA(Glu) to glutamate 1-semialdehyde (GSA).</text>
</comment>
<comment type="catalytic activity">
    <reaction evidence="1">
        <text>(S)-4-amino-5-oxopentanoate + tRNA(Glu) + NADP(+) = L-glutamyl-tRNA(Glu) + NADPH + H(+)</text>
        <dbReference type="Rhea" id="RHEA:12344"/>
        <dbReference type="Rhea" id="RHEA-COMP:9663"/>
        <dbReference type="Rhea" id="RHEA-COMP:9680"/>
        <dbReference type="ChEBI" id="CHEBI:15378"/>
        <dbReference type="ChEBI" id="CHEBI:57501"/>
        <dbReference type="ChEBI" id="CHEBI:57783"/>
        <dbReference type="ChEBI" id="CHEBI:58349"/>
        <dbReference type="ChEBI" id="CHEBI:78442"/>
        <dbReference type="ChEBI" id="CHEBI:78520"/>
        <dbReference type="EC" id="1.2.1.70"/>
    </reaction>
</comment>
<comment type="pathway">
    <text evidence="1">Porphyrin-containing compound metabolism; protoporphyrin-IX biosynthesis; 5-aminolevulinate from L-glutamyl-tRNA(Glu): step 1/2.</text>
</comment>
<comment type="subunit">
    <text evidence="1">Homodimer.</text>
</comment>
<comment type="domain">
    <text evidence="1">Possesses an unusual extended V-shaped dimeric structure with each monomer consisting of three distinct domains arranged along a curved 'spinal' alpha-helix. The N-terminal catalytic domain specifically recognizes the glutamate moiety of the substrate. The second domain is the NADPH-binding domain, and the third C-terminal domain is responsible for dimerization.</text>
</comment>
<comment type="miscellaneous">
    <text evidence="1">During catalysis, the active site Cys acts as a nucleophile attacking the alpha-carbonyl group of tRNA-bound glutamate with the formation of a thioester intermediate between enzyme and glutamate, and the concomitant release of tRNA(Glu). The thioester intermediate is finally reduced by direct hydride transfer from NADPH, to form the product GSA.</text>
</comment>
<comment type="similarity">
    <text evidence="1">Belongs to the glutamyl-tRNA reductase family.</text>
</comment>
<dbReference type="EC" id="1.2.1.70" evidence="1"/>
<dbReference type="EMBL" id="D15073">
    <property type="protein sequence ID" value="BAA03668.1"/>
    <property type="molecule type" value="Genomic_DNA"/>
</dbReference>
<dbReference type="SMR" id="P42808"/>
<dbReference type="eggNOG" id="COG0373">
    <property type="taxonomic scope" value="Bacteria"/>
</dbReference>
<dbReference type="UniPathway" id="UPA00251">
    <property type="reaction ID" value="UER00316"/>
</dbReference>
<dbReference type="GO" id="GO:0008883">
    <property type="term" value="F:glutamyl-tRNA reductase activity"/>
    <property type="evidence" value="ECO:0007669"/>
    <property type="project" value="UniProtKB-UniRule"/>
</dbReference>
<dbReference type="GO" id="GO:0050661">
    <property type="term" value="F:NADP binding"/>
    <property type="evidence" value="ECO:0007669"/>
    <property type="project" value="InterPro"/>
</dbReference>
<dbReference type="GO" id="GO:0019353">
    <property type="term" value="P:protoporphyrinogen IX biosynthetic process from glutamate"/>
    <property type="evidence" value="ECO:0007669"/>
    <property type="project" value="TreeGrafter"/>
</dbReference>
<dbReference type="CDD" id="cd05213">
    <property type="entry name" value="NAD_bind_Glutamyl_tRNA_reduct"/>
    <property type="match status" value="1"/>
</dbReference>
<dbReference type="FunFam" id="3.30.460.30:FF:000001">
    <property type="entry name" value="Glutamyl-tRNA reductase"/>
    <property type="match status" value="1"/>
</dbReference>
<dbReference type="FunFam" id="3.40.50.720:FF:000031">
    <property type="entry name" value="Glutamyl-tRNA reductase"/>
    <property type="match status" value="1"/>
</dbReference>
<dbReference type="Gene3D" id="3.30.460.30">
    <property type="entry name" value="Glutamyl-tRNA reductase, N-terminal domain"/>
    <property type="match status" value="1"/>
</dbReference>
<dbReference type="Gene3D" id="3.40.50.720">
    <property type="entry name" value="NAD(P)-binding Rossmann-like Domain"/>
    <property type="match status" value="1"/>
</dbReference>
<dbReference type="HAMAP" id="MF_00087">
    <property type="entry name" value="Glu_tRNA_reductase"/>
    <property type="match status" value="1"/>
</dbReference>
<dbReference type="InterPro" id="IPR000343">
    <property type="entry name" value="4pyrrol_synth_GluRdtase"/>
</dbReference>
<dbReference type="InterPro" id="IPR015896">
    <property type="entry name" value="4pyrrol_synth_GluRdtase_dimer"/>
</dbReference>
<dbReference type="InterPro" id="IPR015895">
    <property type="entry name" value="4pyrrol_synth_GluRdtase_N"/>
</dbReference>
<dbReference type="InterPro" id="IPR018214">
    <property type="entry name" value="GluRdtase_CS"/>
</dbReference>
<dbReference type="InterPro" id="IPR036453">
    <property type="entry name" value="GluRdtase_dimer_dom_sf"/>
</dbReference>
<dbReference type="InterPro" id="IPR036343">
    <property type="entry name" value="GluRdtase_N_sf"/>
</dbReference>
<dbReference type="InterPro" id="IPR036291">
    <property type="entry name" value="NAD(P)-bd_dom_sf"/>
</dbReference>
<dbReference type="InterPro" id="IPR006151">
    <property type="entry name" value="Shikm_DH/Glu-tRNA_Rdtase"/>
</dbReference>
<dbReference type="NCBIfam" id="TIGR01035">
    <property type="entry name" value="hemA"/>
    <property type="match status" value="1"/>
</dbReference>
<dbReference type="PANTHER" id="PTHR43013">
    <property type="entry name" value="GLUTAMYL-TRNA REDUCTASE"/>
    <property type="match status" value="1"/>
</dbReference>
<dbReference type="PANTHER" id="PTHR43013:SF1">
    <property type="entry name" value="GLUTAMYL-TRNA REDUCTASE"/>
    <property type="match status" value="1"/>
</dbReference>
<dbReference type="Pfam" id="PF00745">
    <property type="entry name" value="GlutR_dimer"/>
    <property type="match status" value="1"/>
</dbReference>
<dbReference type="Pfam" id="PF05201">
    <property type="entry name" value="GlutR_N"/>
    <property type="match status" value="1"/>
</dbReference>
<dbReference type="Pfam" id="PF01488">
    <property type="entry name" value="Shikimate_DH"/>
    <property type="match status" value="1"/>
</dbReference>
<dbReference type="PIRSF" id="PIRSF000445">
    <property type="entry name" value="4pyrrol_synth_GluRdtase"/>
    <property type="match status" value="1"/>
</dbReference>
<dbReference type="SUPFAM" id="SSF69742">
    <property type="entry name" value="Glutamyl tRNA-reductase catalytic, N-terminal domain"/>
    <property type="match status" value="1"/>
</dbReference>
<dbReference type="SUPFAM" id="SSF69075">
    <property type="entry name" value="Glutamyl tRNA-reductase dimerization domain"/>
    <property type="match status" value="1"/>
</dbReference>
<dbReference type="SUPFAM" id="SSF51735">
    <property type="entry name" value="NAD(P)-binding Rossmann-fold domains"/>
    <property type="match status" value="1"/>
</dbReference>
<dbReference type="PROSITE" id="PS00747">
    <property type="entry name" value="GLUTR"/>
    <property type="match status" value="1"/>
</dbReference>
<reference key="1">
    <citation type="journal article" date="1994" name="Appl. Microbiol. Biotechnol.">
        <title>Cloning and characterization of the hemA gene for synthesis of delta-aminolevulinic acid in Xanthomonas campestris pv. phaseoli.</title>
        <authorList>
            <person name="Asahara N."/>
            <person name="Murakami K."/>
            <person name="Korbrisate S."/>
            <person name="Hashimoto Y."/>
            <person name="Murooka Y."/>
        </authorList>
    </citation>
    <scope>NUCLEOTIDE SEQUENCE [GENOMIC DNA]</scope>
    <scope>FUNCTION</scope>
    <source>
        <strain>HUT 8925</strain>
    </source>
</reference>
<protein>
    <recommendedName>
        <fullName evidence="1">Glutamyl-tRNA reductase</fullName>
        <shortName evidence="1">GluTR</shortName>
        <ecNumber evidence="1">1.2.1.70</ecNumber>
    </recommendedName>
</protein>
<feature type="chain" id="PRO_0000114090" description="Glutamyl-tRNA reductase">
    <location>
        <begin position="1"/>
        <end position="426"/>
    </location>
</feature>
<feature type="region of interest" description="Disordered" evidence="2">
    <location>
        <begin position="404"/>
        <end position="426"/>
    </location>
</feature>
<feature type="active site" description="Nucleophile" evidence="1">
    <location>
        <position position="50"/>
    </location>
</feature>
<feature type="binding site" evidence="1">
    <location>
        <begin position="49"/>
        <end position="52"/>
    </location>
    <ligand>
        <name>substrate</name>
    </ligand>
</feature>
<feature type="binding site" evidence="1">
    <location>
        <position position="101"/>
    </location>
    <ligand>
        <name>substrate</name>
    </ligand>
</feature>
<feature type="binding site" evidence="1">
    <location>
        <begin position="106"/>
        <end position="108"/>
    </location>
    <ligand>
        <name>substrate</name>
    </ligand>
</feature>
<feature type="binding site" evidence="1">
    <location>
        <position position="112"/>
    </location>
    <ligand>
        <name>substrate</name>
    </ligand>
</feature>
<feature type="binding site" evidence="1">
    <location>
        <begin position="181"/>
        <end position="186"/>
    </location>
    <ligand>
        <name>NADP(+)</name>
        <dbReference type="ChEBI" id="CHEBI:58349"/>
    </ligand>
</feature>
<feature type="site" description="Important for activity" evidence="1">
    <location>
        <position position="91"/>
    </location>
</feature>
<sequence>MTLWVLGLNHQTAPVDLRERAAFAGDALPRALESLRALPQVSEAALLSTCNRTELYAMAEEAHSLVTWLETHAPALSGYLYQHQEAEAVRHLFRVATGLDSMVLGEPQILGQVKDAWAVARAHGTLGSGLDRLFQQTFSVAKRARTDTRVGANPVSVASTAVRLAQDSFARLNESTVLLIGAGETIELAAKHLSEGRVRRLLIANRTLAHAQTLASQHGGFALPLTDLERHLAEADVVFSATAAREPLVTRAQVEQALRARKRKPMLLFDLAVPRDIEASVGELSDAYLYTVDDLERAVEDNRRGRREAADQAEAIIDLQVARYVETLQANARQAPLKRLRAFGDSTRDELLAKARQQLHNGKPADEVLEQLAHALTNRLLHPPTAALRDAALNNDLELTTAADRLFPEKPGLPTSPHSYPDREDR</sequence>
<proteinExistence type="inferred from homology"/>
<evidence type="ECO:0000255" key="1">
    <source>
        <dbReference type="HAMAP-Rule" id="MF_00087"/>
    </source>
</evidence>
<evidence type="ECO:0000256" key="2">
    <source>
        <dbReference type="SAM" id="MobiDB-lite"/>
    </source>
</evidence>
<evidence type="ECO:0000305" key="3">
    <source>
    </source>
</evidence>
<gene>
    <name evidence="1" type="primary">hemA</name>
</gene>
<name>HEM1_XANCH</name>
<accession>P42808</accession>